<gene>
    <name evidence="1" type="primary">hfq</name>
    <name type="ordered locus">Athe_1497</name>
</gene>
<evidence type="ECO:0000255" key="1">
    <source>
        <dbReference type="HAMAP-Rule" id="MF_00436"/>
    </source>
</evidence>
<evidence type="ECO:0000255" key="2">
    <source>
        <dbReference type="PROSITE-ProRule" id="PRU01346"/>
    </source>
</evidence>
<evidence type="ECO:0000256" key="3">
    <source>
        <dbReference type="SAM" id="MobiDB-lite"/>
    </source>
</evidence>
<organism>
    <name type="scientific">Caldicellulosiruptor bescii (strain ATCC BAA-1888 / DSM 6725 / KCTC 15123 / Z-1320)</name>
    <name type="common">Anaerocellum thermophilum</name>
    <dbReference type="NCBI Taxonomy" id="521460"/>
    <lineage>
        <taxon>Bacteria</taxon>
        <taxon>Bacillati</taxon>
        <taxon>Bacillota</taxon>
        <taxon>Bacillota incertae sedis</taxon>
        <taxon>Caldicellulosiruptorales</taxon>
        <taxon>Caldicellulosiruptoraceae</taxon>
        <taxon>Caldicellulosiruptor</taxon>
    </lineage>
</organism>
<name>HFQ_CALBD</name>
<keyword id="KW-0694">RNA-binding</keyword>
<keyword id="KW-0346">Stress response</keyword>
<feature type="chain" id="PRO_1000135016" description="RNA-binding protein Hfq">
    <location>
        <begin position="1"/>
        <end position="92"/>
    </location>
</feature>
<feature type="domain" description="Sm" evidence="2">
    <location>
        <begin position="10"/>
        <end position="71"/>
    </location>
</feature>
<feature type="region of interest" description="Disordered" evidence="3">
    <location>
        <begin position="73"/>
        <end position="92"/>
    </location>
</feature>
<feature type="compositionally biased region" description="Low complexity" evidence="3">
    <location>
        <begin position="75"/>
        <end position="92"/>
    </location>
</feature>
<comment type="function">
    <text evidence="1">RNA chaperone that binds small regulatory RNA (sRNAs) and mRNAs to facilitate mRNA translational regulation in response to envelope stress, environmental stress and changes in metabolite concentrations. Also binds with high specificity to tRNAs.</text>
</comment>
<comment type="subunit">
    <text evidence="1">Homohexamer.</text>
</comment>
<comment type="similarity">
    <text evidence="1">Belongs to the Hfq family.</text>
</comment>
<proteinExistence type="inferred from homology"/>
<reference key="1">
    <citation type="submission" date="2009-01" db="EMBL/GenBank/DDBJ databases">
        <title>Complete sequence of chromosome of Caldicellulosiruptor becscii DSM 6725.</title>
        <authorList>
            <person name="Lucas S."/>
            <person name="Copeland A."/>
            <person name="Lapidus A."/>
            <person name="Glavina del Rio T."/>
            <person name="Tice H."/>
            <person name="Bruce D."/>
            <person name="Goodwin L."/>
            <person name="Pitluck S."/>
            <person name="Sims D."/>
            <person name="Meincke L."/>
            <person name="Brettin T."/>
            <person name="Detter J.C."/>
            <person name="Han C."/>
            <person name="Larimer F."/>
            <person name="Land M."/>
            <person name="Hauser L."/>
            <person name="Kyrpides N."/>
            <person name="Ovchinnikova G."/>
            <person name="Kataeva I."/>
            <person name="Adams M.W.W."/>
        </authorList>
    </citation>
    <scope>NUCLEOTIDE SEQUENCE [LARGE SCALE GENOMIC DNA]</scope>
    <source>
        <strain>ATCC BAA-1888 / DSM 6725 / KCTC 15123 / Z-1320</strain>
    </source>
</reference>
<accession>B9MJT7</accession>
<sequence>MAKGSLNLQDLFLNQLRKEKVNVTIFLLSGFQLKGVIKGFDNFTLIVETDNNKQQLIYKHAISSIMPSKPINYMAQAQNNQQASQQSNNNQG</sequence>
<protein>
    <recommendedName>
        <fullName evidence="1">RNA-binding protein Hfq</fullName>
    </recommendedName>
</protein>
<dbReference type="EMBL" id="CP001393">
    <property type="protein sequence ID" value="ACM60595.1"/>
    <property type="molecule type" value="Genomic_DNA"/>
</dbReference>
<dbReference type="RefSeq" id="WP_015907951.1">
    <property type="nucleotide sequence ID" value="NC_012034.1"/>
</dbReference>
<dbReference type="SMR" id="B9MJT7"/>
<dbReference type="STRING" id="521460.Athe_1497"/>
<dbReference type="GeneID" id="31772842"/>
<dbReference type="KEGG" id="ate:Athe_1497"/>
<dbReference type="eggNOG" id="COG1923">
    <property type="taxonomic scope" value="Bacteria"/>
</dbReference>
<dbReference type="HOGENOM" id="CLU_113688_0_2_9"/>
<dbReference type="Proteomes" id="UP000007723">
    <property type="component" value="Chromosome"/>
</dbReference>
<dbReference type="GO" id="GO:0005829">
    <property type="term" value="C:cytosol"/>
    <property type="evidence" value="ECO:0007669"/>
    <property type="project" value="TreeGrafter"/>
</dbReference>
<dbReference type="GO" id="GO:0003723">
    <property type="term" value="F:RNA binding"/>
    <property type="evidence" value="ECO:0007669"/>
    <property type="project" value="UniProtKB-UniRule"/>
</dbReference>
<dbReference type="GO" id="GO:0006355">
    <property type="term" value="P:regulation of DNA-templated transcription"/>
    <property type="evidence" value="ECO:0007669"/>
    <property type="project" value="InterPro"/>
</dbReference>
<dbReference type="GO" id="GO:0043487">
    <property type="term" value="P:regulation of RNA stability"/>
    <property type="evidence" value="ECO:0007669"/>
    <property type="project" value="TreeGrafter"/>
</dbReference>
<dbReference type="GO" id="GO:0045974">
    <property type="term" value="P:regulation of translation, ncRNA-mediated"/>
    <property type="evidence" value="ECO:0007669"/>
    <property type="project" value="TreeGrafter"/>
</dbReference>
<dbReference type="CDD" id="cd01716">
    <property type="entry name" value="Hfq"/>
    <property type="match status" value="1"/>
</dbReference>
<dbReference type="Gene3D" id="2.30.30.100">
    <property type="match status" value="1"/>
</dbReference>
<dbReference type="HAMAP" id="MF_00436">
    <property type="entry name" value="Hfq"/>
    <property type="match status" value="1"/>
</dbReference>
<dbReference type="InterPro" id="IPR005001">
    <property type="entry name" value="Hfq"/>
</dbReference>
<dbReference type="InterPro" id="IPR010920">
    <property type="entry name" value="LSM_dom_sf"/>
</dbReference>
<dbReference type="InterPro" id="IPR047575">
    <property type="entry name" value="Sm"/>
</dbReference>
<dbReference type="NCBIfam" id="TIGR02383">
    <property type="entry name" value="Hfq"/>
    <property type="match status" value="1"/>
</dbReference>
<dbReference type="NCBIfam" id="NF001602">
    <property type="entry name" value="PRK00395.1"/>
    <property type="match status" value="1"/>
</dbReference>
<dbReference type="PANTHER" id="PTHR34772">
    <property type="entry name" value="RNA-BINDING PROTEIN HFQ"/>
    <property type="match status" value="1"/>
</dbReference>
<dbReference type="PANTHER" id="PTHR34772:SF1">
    <property type="entry name" value="RNA-BINDING PROTEIN HFQ"/>
    <property type="match status" value="1"/>
</dbReference>
<dbReference type="Pfam" id="PF17209">
    <property type="entry name" value="Hfq"/>
    <property type="match status" value="1"/>
</dbReference>
<dbReference type="SUPFAM" id="SSF50182">
    <property type="entry name" value="Sm-like ribonucleoproteins"/>
    <property type="match status" value="1"/>
</dbReference>
<dbReference type="PROSITE" id="PS52002">
    <property type="entry name" value="SM"/>
    <property type="match status" value="1"/>
</dbReference>